<dbReference type="EMBL" id="V00080">
    <property type="protein sequence ID" value="CAA23422.1"/>
    <property type="molecule type" value="mRNA"/>
</dbReference>
<dbReference type="GO" id="GO:0042600">
    <property type="term" value="C:egg chorion"/>
    <property type="evidence" value="ECO:0007669"/>
    <property type="project" value="InterPro"/>
</dbReference>
<dbReference type="GO" id="GO:0005213">
    <property type="term" value="F:structural constituent of egg chorion"/>
    <property type="evidence" value="ECO:0007669"/>
    <property type="project" value="InterPro"/>
</dbReference>
<dbReference type="GO" id="GO:0007304">
    <property type="term" value="P:chorion-containing eggshell formation"/>
    <property type="evidence" value="ECO:0007669"/>
    <property type="project" value="InterPro"/>
</dbReference>
<dbReference type="InterPro" id="IPR002635">
    <property type="entry name" value="Chorion"/>
</dbReference>
<dbReference type="Pfam" id="PF01723">
    <property type="entry name" value="Chorion_1"/>
    <property type="match status" value="1"/>
</dbReference>
<keyword id="KW-0677">Repeat</keyword>
<reference key="1">
    <citation type="journal article" date="1983" name="Proc. Natl. Acad. Sci. U.S.A.">
        <title>Silkmoth chorion multigene families constitute a superfamily: comparison of C and B family sequences.</title>
        <authorList>
            <person name="Regier J.C."/>
            <person name="Kafatos F.C."/>
            <person name="Hamodrakas S.J."/>
        </authorList>
    </citation>
    <scope>NUCLEOTIDE SEQUENCE [MRNA]</scope>
</reference>
<sequence>DGIFPTVGAGDVWYGCGDGAVGIVAETPFASTTTNPA</sequence>
<proteinExistence type="evidence at transcript level"/>
<comment type="function">
    <text>This protein is one of many from the eggshell of the silk moth.</text>
</comment>
<comment type="similarity">
    <text evidence="1">Belongs to the chorion protein family.</text>
</comment>
<protein>
    <recommendedName>
        <fullName>Chorion class CB protein PCH12</fullName>
    </recommendedName>
</protein>
<evidence type="ECO:0000305" key="1"/>
<name>CHCB3_ANTPO</name>
<organism>
    <name type="scientific">Antheraea polyphemus</name>
    <name type="common">Polyphemus moth</name>
    <dbReference type="NCBI Taxonomy" id="7120"/>
    <lineage>
        <taxon>Eukaryota</taxon>
        <taxon>Metazoa</taxon>
        <taxon>Ecdysozoa</taxon>
        <taxon>Arthropoda</taxon>
        <taxon>Hexapoda</taxon>
        <taxon>Insecta</taxon>
        <taxon>Pterygota</taxon>
        <taxon>Neoptera</taxon>
        <taxon>Endopterygota</taxon>
        <taxon>Lepidoptera</taxon>
        <taxon>Glossata</taxon>
        <taxon>Ditrysia</taxon>
        <taxon>Bombycoidea</taxon>
        <taxon>Saturniidae</taxon>
        <taxon>Saturniinae</taxon>
        <taxon>Saturniini</taxon>
        <taxon>Antheraea</taxon>
    </lineage>
</organism>
<feature type="chain" id="PRO_0000168186" description="Chorion class CB protein PCH12">
    <location>
        <begin position="1" status="less than"/>
        <end position="37" status="greater than"/>
    </location>
</feature>
<feature type="region of interest" description="Central domain">
    <location>
        <begin position="1" status="less than"/>
        <end position="26"/>
    </location>
</feature>
<feature type="region of interest" description="Right arm">
    <location>
        <begin position="27"/>
        <end position="37" status="greater than"/>
    </location>
</feature>
<feature type="non-terminal residue">
    <location>
        <position position="1"/>
    </location>
</feature>
<feature type="non-terminal residue">
    <location>
        <position position="37"/>
    </location>
</feature>
<accession>P08931</accession>